<organism>
    <name type="scientific">Salmonella heidelberg (strain SL476)</name>
    <dbReference type="NCBI Taxonomy" id="454169"/>
    <lineage>
        <taxon>Bacteria</taxon>
        <taxon>Pseudomonadati</taxon>
        <taxon>Pseudomonadota</taxon>
        <taxon>Gammaproteobacteria</taxon>
        <taxon>Enterobacterales</taxon>
        <taxon>Enterobacteriaceae</taxon>
        <taxon>Salmonella</taxon>
    </lineage>
</organism>
<feature type="chain" id="PRO_1000114291" description="Probable septum site-determining protein MinC">
    <location>
        <begin position="1"/>
        <end position="235"/>
    </location>
</feature>
<feature type="region of interest" description="Disordered" evidence="2">
    <location>
        <begin position="104"/>
        <end position="125"/>
    </location>
</feature>
<feature type="compositionally biased region" description="Pro residues" evidence="2">
    <location>
        <begin position="110"/>
        <end position="119"/>
    </location>
</feature>
<reference key="1">
    <citation type="journal article" date="2011" name="J. Bacteriol.">
        <title>Comparative genomics of 28 Salmonella enterica isolates: evidence for CRISPR-mediated adaptive sublineage evolution.</title>
        <authorList>
            <person name="Fricke W.F."/>
            <person name="Mammel M.K."/>
            <person name="McDermott P.F."/>
            <person name="Tartera C."/>
            <person name="White D.G."/>
            <person name="Leclerc J.E."/>
            <person name="Ravel J."/>
            <person name="Cebula T.A."/>
        </authorList>
    </citation>
    <scope>NUCLEOTIDE SEQUENCE [LARGE SCALE GENOMIC DNA]</scope>
    <source>
        <strain>SL476</strain>
    </source>
</reference>
<name>MINC_SALHS</name>
<gene>
    <name evidence="1" type="primary">minC</name>
    <name type="ordered locus">SeHA_C2013</name>
</gene>
<dbReference type="EMBL" id="CP001120">
    <property type="protein sequence ID" value="ACF68582.1"/>
    <property type="molecule type" value="Genomic_DNA"/>
</dbReference>
<dbReference type="RefSeq" id="WP_000072527.1">
    <property type="nucleotide sequence ID" value="NC_011083.1"/>
</dbReference>
<dbReference type="SMR" id="B4TKE5"/>
<dbReference type="KEGG" id="seh:SeHA_C2013"/>
<dbReference type="HOGENOM" id="CLU_067812_0_1_6"/>
<dbReference type="Proteomes" id="UP000001866">
    <property type="component" value="Chromosome"/>
</dbReference>
<dbReference type="GO" id="GO:0000902">
    <property type="term" value="P:cell morphogenesis"/>
    <property type="evidence" value="ECO:0007669"/>
    <property type="project" value="InterPro"/>
</dbReference>
<dbReference type="GO" id="GO:0000917">
    <property type="term" value="P:division septum assembly"/>
    <property type="evidence" value="ECO:0007669"/>
    <property type="project" value="UniProtKB-KW"/>
</dbReference>
<dbReference type="GO" id="GO:0051302">
    <property type="term" value="P:regulation of cell division"/>
    <property type="evidence" value="ECO:0007669"/>
    <property type="project" value="InterPro"/>
</dbReference>
<dbReference type="GO" id="GO:1901891">
    <property type="term" value="P:regulation of cell septum assembly"/>
    <property type="evidence" value="ECO:0007669"/>
    <property type="project" value="InterPro"/>
</dbReference>
<dbReference type="FunFam" id="2.160.20.70:FF:000002">
    <property type="entry name" value="Probable septum site-determining protein MinC"/>
    <property type="match status" value="1"/>
</dbReference>
<dbReference type="Gene3D" id="2.160.20.70">
    <property type="match status" value="1"/>
</dbReference>
<dbReference type="Gene3D" id="3.30.70.260">
    <property type="match status" value="1"/>
</dbReference>
<dbReference type="HAMAP" id="MF_00267">
    <property type="entry name" value="MinC"/>
    <property type="match status" value="1"/>
</dbReference>
<dbReference type="InterPro" id="IPR016098">
    <property type="entry name" value="CAP/MinC_C"/>
</dbReference>
<dbReference type="InterPro" id="IPR013033">
    <property type="entry name" value="MinC"/>
</dbReference>
<dbReference type="InterPro" id="IPR036145">
    <property type="entry name" value="MinC_C_sf"/>
</dbReference>
<dbReference type="InterPro" id="IPR007874">
    <property type="entry name" value="MinC_N"/>
</dbReference>
<dbReference type="InterPro" id="IPR005526">
    <property type="entry name" value="Septum_form_inhib_MinC_C"/>
</dbReference>
<dbReference type="NCBIfam" id="TIGR01222">
    <property type="entry name" value="minC"/>
    <property type="match status" value="1"/>
</dbReference>
<dbReference type="PANTHER" id="PTHR34108">
    <property type="entry name" value="SEPTUM SITE-DETERMINING PROTEIN MINC"/>
    <property type="match status" value="1"/>
</dbReference>
<dbReference type="PANTHER" id="PTHR34108:SF1">
    <property type="entry name" value="SEPTUM SITE-DETERMINING PROTEIN MINC"/>
    <property type="match status" value="1"/>
</dbReference>
<dbReference type="Pfam" id="PF03775">
    <property type="entry name" value="MinC_C"/>
    <property type="match status" value="1"/>
</dbReference>
<dbReference type="Pfam" id="PF05209">
    <property type="entry name" value="MinC_N"/>
    <property type="match status" value="1"/>
</dbReference>
<dbReference type="SUPFAM" id="SSF63848">
    <property type="entry name" value="Cell-division inhibitor MinC, C-terminal domain"/>
    <property type="match status" value="1"/>
</dbReference>
<accession>B4TKE5</accession>
<protein>
    <recommendedName>
        <fullName evidence="1">Probable septum site-determining protein MinC</fullName>
    </recommendedName>
</protein>
<keyword id="KW-0131">Cell cycle</keyword>
<keyword id="KW-0132">Cell division</keyword>
<keyword id="KW-0717">Septation</keyword>
<proteinExistence type="inferred from homology"/>
<evidence type="ECO:0000255" key="1">
    <source>
        <dbReference type="HAMAP-Rule" id="MF_00267"/>
    </source>
</evidence>
<evidence type="ECO:0000256" key="2">
    <source>
        <dbReference type="SAM" id="MobiDB-lite"/>
    </source>
</evidence>
<sequence length="235" mass="25246">MSNTPIELKGSSFTLSVVHLHEAEPEVIRQALEDKIAQAPAFLKHAPVVINVSGLESPVNWPELHKIVTSTGLRIIGVSGCKDASLKVEIDRMGLPLLTEGKEKAVRPAPVEPATPSEPPQNANPITKTRLIDVPVRSGQRIYAPQCDLIVTSHVSAGAELIADGNIHVYGMMRGRALAGASGDREAQIFCTHLTAELVSIAGVYWLSDKIPAEFYGKAARLRLADNALTVQPLN</sequence>
<comment type="function">
    <text evidence="1">Cell division inhibitor that blocks the formation of polar Z ring septums. Rapidly oscillates between the poles of the cell to destabilize FtsZ filaments that have formed before they mature into polar Z rings. Prevents FtsZ polymerization.</text>
</comment>
<comment type="subunit">
    <text evidence="1">Interacts with MinD and FtsZ.</text>
</comment>
<comment type="similarity">
    <text evidence="1">Belongs to the MinC family.</text>
</comment>